<keyword id="KW-0119">Carbohydrate metabolism</keyword>
<keyword id="KW-0320">Glycogen biosynthesis</keyword>
<keyword id="KW-0321">Glycogen metabolism</keyword>
<keyword id="KW-0328">Glycosyltransferase</keyword>
<keyword id="KW-1185">Reference proteome</keyword>
<keyword id="KW-0808">Transferase</keyword>
<protein>
    <recommendedName>
        <fullName evidence="1">1,4-alpha-glucan branching enzyme GlgB</fullName>
        <ecNumber evidence="1">2.4.1.18</ecNumber>
    </recommendedName>
    <alternativeName>
        <fullName evidence="1">1,4-alpha-D-glucan:1,4-alpha-D-glucan 6-glucosyl-transferase</fullName>
    </alternativeName>
    <alternativeName>
        <fullName evidence="1">Alpha-(1-&gt;4)-glucan branching enzyme</fullName>
    </alternativeName>
    <alternativeName>
        <fullName evidence="1">Glycogen branching enzyme</fullName>
        <shortName evidence="1">BE</shortName>
    </alternativeName>
</protein>
<reference key="1">
    <citation type="journal article" date="2001" name="Science">
        <title>Complete genome sequence of a virulent isolate of Streptococcus pneumoniae.</title>
        <authorList>
            <person name="Tettelin H."/>
            <person name="Nelson K.E."/>
            <person name="Paulsen I.T."/>
            <person name="Eisen J.A."/>
            <person name="Read T.D."/>
            <person name="Peterson S.N."/>
            <person name="Heidelberg J.F."/>
            <person name="DeBoy R.T."/>
            <person name="Haft D.H."/>
            <person name="Dodson R.J."/>
            <person name="Durkin A.S."/>
            <person name="Gwinn M.L."/>
            <person name="Kolonay J.F."/>
            <person name="Nelson W.C."/>
            <person name="Peterson J.D."/>
            <person name="Umayam L.A."/>
            <person name="White O."/>
            <person name="Salzberg S.L."/>
            <person name="Lewis M.R."/>
            <person name="Radune D."/>
            <person name="Holtzapple E.K."/>
            <person name="Khouri H.M."/>
            <person name="Wolf A.M."/>
            <person name="Utterback T.R."/>
            <person name="Hansen C.L."/>
            <person name="McDonald L.A."/>
            <person name="Feldblyum T.V."/>
            <person name="Angiuoli S.V."/>
            <person name="Dickinson T."/>
            <person name="Hickey E.K."/>
            <person name="Holt I.E."/>
            <person name="Loftus B.J."/>
            <person name="Yang F."/>
            <person name="Smith H.O."/>
            <person name="Venter J.C."/>
            <person name="Dougherty B.A."/>
            <person name="Morrison D.A."/>
            <person name="Hollingshead S.K."/>
            <person name="Fraser C.M."/>
        </authorList>
    </citation>
    <scope>NUCLEOTIDE SEQUENCE [LARGE SCALE GENOMIC DNA]</scope>
    <source>
        <strain>ATCC BAA-334 / TIGR4</strain>
    </source>
</reference>
<name>GLGB_STRPN</name>
<proteinExistence type="inferred from homology"/>
<evidence type="ECO:0000255" key="1">
    <source>
        <dbReference type="HAMAP-Rule" id="MF_00685"/>
    </source>
</evidence>
<sequence length="642" mass="75603">MDNREALKTFMTGENFYLQHYLGAHREELNGEHGYTFRVWAPNAQAVHLVGDFTNWIENQIPMVRNDFGVWEVFTNMAQEGHIYKYHVTRQNGHQLMKIDPFAVRYEARPGTGAIVTELPEKKWKDGLWLARRKRWGFEERPVNIYEVHAGSWKRNSDGSPYSFAQLKDELIPYLVEMNYTHIEFMPLMSHPLGLSWGYQLMGYFALEHAYGRPEEFQDFVEECHTHNIGVIVDWVPGHFTINDDALAYYDGTPTFEYQDHNKAHNHGWGALNFDLGKNEVQSFLISCIKHWIDVYHLDGIRVDAVSNMLYLDYDDAPWTPNKDGGNLNYEGYYFLQRLNEVIKLEYPDVMMIAEESSSAIKITGMKEIGGLGFDYKWNMGWMNDILRFYEEDPIYRKYDFNLVTFSFMYVFKENYLLPFSHDEVVHGKKSMMHKMWGDRYNQFAGLRNLYTYQICHPGKKLLFMGSEYGQFLEWKSEEQLEWSNLEDPMNAKMKYFASQLNQFYKDHRCLWEIDTSYDGIEIIDADNRDQSVLSFIRKGKKGEMLVCIFNMVPVERKDFTIGLPVAGIYEEVWNTELEEWGGVWKEHNQTVQTQEGLWKDYEQTLTFTLPAMGASVWKIKRRLKSTKTVTNKNQKGVENEK</sequence>
<organism>
    <name type="scientific">Streptococcus pneumoniae serotype 4 (strain ATCC BAA-334 / TIGR4)</name>
    <dbReference type="NCBI Taxonomy" id="170187"/>
    <lineage>
        <taxon>Bacteria</taxon>
        <taxon>Bacillati</taxon>
        <taxon>Bacillota</taxon>
        <taxon>Bacilli</taxon>
        <taxon>Lactobacillales</taxon>
        <taxon>Streptococcaceae</taxon>
        <taxon>Streptococcus</taxon>
    </lineage>
</organism>
<comment type="function">
    <text evidence="1">Catalyzes the formation of the alpha-1,6-glucosidic linkages in glycogen by scission of a 1,4-alpha-linked oligosaccharide from growing alpha-1,4-glucan chains and the subsequent attachment of the oligosaccharide to the alpha-1,6 position.</text>
</comment>
<comment type="catalytic activity">
    <reaction evidence="1">
        <text>Transfers a segment of a (1-&gt;4)-alpha-D-glucan chain to a primary hydroxy group in a similar glucan chain.</text>
        <dbReference type="EC" id="2.4.1.18"/>
    </reaction>
</comment>
<comment type="pathway">
    <text evidence="1">Glycan biosynthesis; glycogen biosynthesis.</text>
</comment>
<comment type="subunit">
    <text evidence="1">Monomer.</text>
</comment>
<comment type="similarity">
    <text evidence="1">Belongs to the glycosyl hydrolase 13 family. GlgB subfamily.</text>
</comment>
<accession>Q97QS8</accession>
<feature type="chain" id="PRO_0000188752" description="1,4-alpha-glucan branching enzyme GlgB">
    <location>
        <begin position="1"/>
        <end position="642"/>
    </location>
</feature>
<feature type="active site" description="Nucleophile" evidence="1">
    <location>
        <position position="304"/>
    </location>
</feature>
<feature type="active site" description="Proton donor" evidence="1">
    <location>
        <position position="355"/>
    </location>
</feature>
<dbReference type="EC" id="2.4.1.18" evidence="1"/>
<dbReference type="EMBL" id="AE005672">
    <property type="protein sequence ID" value="AAK75232.1"/>
    <property type="molecule type" value="Genomic_DNA"/>
</dbReference>
<dbReference type="PIR" id="G95129">
    <property type="entry name" value="G95129"/>
</dbReference>
<dbReference type="RefSeq" id="WP_000370260.1">
    <property type="nucleotide sequence ID" value="NZ_CP155539.1"/>
</dbReference>
<dbReference type="SMR" id="Q97QS8"/>
<dbReference type="CAZy" id="CBM48">
    <property type="family name" value="Carbohydrate-Binding Module Family 48"/>
</dbReference>
<dbReference type="CAZy" id="GH13">
    <property type="family name" value="Glycoside Hydrolase Family 13"/>
</dbReference>
<dbReference type="PaxDb" id="170187-SP_1121"/>
<dbReference type="EnsemblBacteria" id="AAK75232">
    <property type="protein sequence ID" value="AAK75232"/>
    <property type="gene ID" value="SP_1121"/>
</dbReference>
<dbReference type="KEGG" id="spn:SP_1121"/>
<dbReference type="eggNOG" id="COG0296">
    <property type="taxonomic scope" value="Bacteria"/>
</dbReference>
<dbReference type="PhylomeDB" id="Q97QS8"/>
<dbReference type="BioCyc" id="SPNE170187:G1FZB-1145-MONOMER"/>
<dbReference type="UniPathway" id="UPA00164"/>
<dbReference type="Proteomes" id="UP000000585">
    <property type="component" value="Chromosome"/>
</dbReference>
<dbReference type="GO" id="GO:0005829">
    <property type="term" value="C:cytosol"/>
    <property type="evidence" value="ECO:0007669"/>
    <property type="project" value="TreeGrafter"/>
</dbReference>
<dbReference type="GO" id="GO:0003844">
    <property type="term" value="F:1,4-alpha-glucan branching enzyme activity"/>
    <property type="evidence" value="ECO:0007669"/>
    <property type="project" value="UniProtKB-UniRule"/>
</dbReference>
<dbReference type="GO" id="GO:0043169">
    <property type="term" value="F:cation binding"/>
    <property type="evidence" value="ECO:0007669"/>
    <property type="project" value="InterPro"/>
</dbReference>
<dbReference type="GO" id="GO:0004553">
    <property type="term" value="F:hydrolase activity, hydrolyzing O-glycosyl compounds"/>
    <property type="evidence" value="ECO:0007669"/>
    <property type="project" value="InterPro"/>
</dbReference>
<dbReference type="GO" id="GO:0005978">
    <property type="term" value="P:glycogen biosynthetic process"/>
    <property type="evidence" value="ECO:0007669"/>
    <property type="project" value="UniProtKB-UniRule"/>
</dbReference>
<dbReference type="CDD" id="cd11322">
    <property type="entry name" value="AmyAc_Glg_BE"/>
    <property type="match status" value="1"/>
</dbReference>
<dbReference type="CDD" id="cd02855">
    <property type="entry name" value="E_set_GBE_prok_N"/>
    <property type="match status" value="1"/>
</dbReference>
<dbReference type="FunFam" id="3.20.20.80:FF:000003">
    <property type="entry name" value="1,4-alpha-glucan branching enzyme GlgB"/>
    <property type="match status" value="1"/>
</dbReference>
<dbReference type="Gene3D" id="3.20.20.80">
    <property type="entry name" value="Glycosidases"/>
    <property type="match status" value="1"/>
</dbReference>
<dbReference type="Gene3D" id="2.60.40.1180">
    <property type="entry name" value="Golgi alpha-mannosidase II"/>
    <property type="match status" value="1"/>
</dbReference>
<dbReference type="Gene3D" id="2.60.40.10">
    <property type="entry name" value="Immunoglobulins"/>
    <property type="match status" value="1"/>
</dbReference>
<dbReference type="HAMAP" id="MF_00685">
    <property type="entry name" value="GlgB"/>
    <property type="match status" value="1"/>
</dbReference>
<dbReference type="InterPro" id="IPR006048">
    <property type="entry name" value="A-amylase/branching_C"/>
</dbReference>
<dbReference type="InterPro" id="IPR037439">
    <property type="entry name" value="Branching_enzy"/>
</dbReference>
<dbReference type="InterPro" id="IPR006407">
    <property type="entry name" value="GlgB"/>
</dbReference>
<dbReference type="InterPro" id="IPR044143">
    <property type="entry name" value="GlgB_N_E_set_prok"/>
</dbReference>
<dbReference type="InterPro" id="IPR006047">
    <property type="entry name" value="Glyco_hydro_13_cat_dom"/>
</dbReference>
<dbReference type="InterPro" id="IPR004193">
    <property type="entry name" value="Glyco_hydro_13_N"/>
</dbReference>
<dbReference type="InterPro" id="IPR013780">
    <property type="entry name" value="Glyco_hydro_b"/>
</dbReference>
<dbReference type="InterPro" id="IPR017853">
    <property type="entry name" value="Glycoside_hydrolase_SF"/>
</dbReference>
<dbReference type="InterPro" id="IPR013783">
    <property type="entry name" value="Ig-like_fold"/>
</dbReference>
<dbReference type="InterPro" id="IPR014756">
    <property type="entry name" value="Ig_E-set"/>
</dbReference>
<dbReference type="NCBIfam" id="TIGR01515">
    <property type="entry name" value="branching_enzym"/>
    <property type="match status" value="1"/>
</dbReference>
<dbReference type="NCBIfam" id="NF003811">
    <property type="entry name" value="PRK05402.1"/>
    <property type="match status" value="1"/>
</dbReference>
<dbReference type="NCBIfam" id="NF008967">
    <property type="entry name" value="PRK12313.1"/>
    <property type="match status" value="1"/>
</dbReference>
<dbReference type="PANTHER" id="PTHR43651">
    <property type="entry name" value="1,4-ALPHA-GLUCAN-BRANCHING ENZYME"/>
    <property type="match status" value="1"/>
</dbReference>
<dbReference type="PANTHER" id="PTHR43651:SF3">
    <property type="entry name" value="1,4-ALPHA-GLUCAN-BRANCHING ENZYME"/>
    <property type="match status" value="1"/>
</dbReference>
<dbReference type="Pfam" id="PF00128">
    <property type="entry name" value="Alpha-amylase"/>
    <property type="match status" value="2"/>
</dbReference>
<dbReference type="Pfam" id="PF02806">
    <property type="entry name" value="Alpha-amylase_C"/>
    <property type="match status" value="1"/>
</dbReference>
<dbReference type="Pfam" id="PF02922">
    <property type="entry name" value="CBM_48"/>
    <property type="match status" value="1"/>
</dbReference>
<dbReference type="PIRSF" id="PIRSF000463">
    <property type="entry name" value="GlgB"/>
    <property type="match status" value="1"/>
</dbReference>
<dbReference type="SMART" id="SM00642">
    <property type="entry name" value="Aamy"/>
    <property type="match status" value="1"/>
</dbReference>
<dbReference type="SUPFAM" id="SSF51445">
    <property type="entry name" value="(Trans)glycosidases"/>
    <property type="match status" value="1"/>
</dbReference>
<dbReference type="SUPFAM" id="SSF81296">
    <property type="entry name" value="E set domains"/>
    <property type="match status" value="1"/>
</dbReference>
<dbReference type="SUPFAM" id="SSF51011">
    <property type="entry name" value="Glycosyl hydrolase domain"/>
    <property type="match status" value="1"/>
</dbReference>
<gene>
    <name evidence="1" type="primary">glgB</name>
    <name type="ordered locus">SP_1121</name>
</gene>